<protein>
    <recommendedName>
        <fullName evidence="10">6-methylsalicylic acid synthase</fullName>
        <shortName evidence="10">6MSAS</shortName>
        <ecNumber evidence="9">2.3.1.165</ecNumber>
    </recommendedName>
    <alternativeName>
        <fullName evidence="10">Non-reducing polyketide synthase yanA</fullName>
    </alternativeName>
    <alternativeName>
        <fullName evidence="10">Yanuthone D biosynthesis cluster protein A</fullName>
    </alternativeName>
</protein>
<organism>
    <name type="scientific">Aspergillus niger (strain ATCC 1015 / CBS 113.46 / FGSC A1144 / LSHB Ac4 / NCTC 3858a / NRRL 328 / USDA 3528.7)</name>
    <dbReference type="NCBI Taxonomy" id="380704"/>
    <lineage>
        <taxon>Eukaryota</taxon>
        <taxon>Fungi</taxon>
        <taxon>Dikarya</taxon>
        <taxon>Ascomycota</taxon>
        <taxon>Pezizomycotina</taxon>
        <taxon>Eurotiomycetes</taxon>
        <taxon>Eurotiomycetidae</taxon>
        <taxon>Eurotiales</taxon>
        <taxon>Aspergillaceae</taxon>
        <taxon>Aspergillus</taxon>
        <taxon>Aspergillus subgen. Circumdati</taxon>
    </lineage>
</organism>
<reference key="1">
    <citation type="journal article" date="2011" name="Genome Res.">
        <title>Comparative genomics of citric-acid-producing Aspergillus niger ATCC 1015 versus enzyme-producing CBS 513.88.</title>
        <authorList>
            <person name="Andersen M.R."/>
            <person name="Salazar M.P."/>
            <person name="Schaap P.J."/>
            <person name="van de Vondervoort P.J.I."/>
            <person name="Culley D."/>
            <person name="Thykaer J."/>
            <person name="Frisvad J.C."/>
            <person name="Nielsen K.F."/>
            <person name="Albang R."/>
            <person name="Albermann K."/>
            <person name="Berka R.M."/>
            <person name="Braus G.H."/>
            <person name="Braus-Stromeyer S.A."/>
            <person name="Corrochano L.M."/>
            <person name="Dai Z."/>
            <person name="van Dijck P.W.M."/>
            <person name="Hofmann G."/>
            <person name="Lasure L.L."/>
            <person name="Magnuson J.K."/>
            <person name="Menke H."/>
            <person name="Meijer M."/>
            <person name="Meijer S.L."/>
            <person name="Nielsen J.B."/>
            <person name="Nielsen M.L."/>
            <person name="van Ooyen A.J.J."/>
            <person name="Pel H.J."/>
            <person name="Poulsen L."/>
            <person name="Samson R.A."/>
            <person name="Stam H."/>
            <person name="Tsang A."/>
            <person name="van den Brink J.M."/>
            <person name="Atkins A."/>
            <person name="Aerts A."/>
            <person name="Shapiro H."/>
            <person name="Pangilinan J."/>
            <person name="Salamov A."/>
            <person name="Lou Y."/>
            <person name="Lindquist E."/>
            <person name="Lucas S."/>
            <person name="Grimwood J."/>
            <person name="Grigoriev I.V."/>
            <person name="Kubicek C.P."/>
            <person name="Martinez D."/>
            <person name="van Peij N.N.M.E."/>
            <person name="Roubos J.A."/>
            <person name="Nielsen J."/>
            <person name="Baker S.E."/>
        </authorList>
    </citation>
    <scope>NUCLEOTIDE SEQUENCE [LARGE SCALE GENOMIC DNA]</scope>
    <source>
        <strain>ATCC 1015 / CBS 113.46 / FGSC A1144 / LSHB Ac4 / NCTC 3858a / NRRL 328 / USDA 3528.7</strain>
    </source>
</reference>
<reference key="2">
    <citation type="journal article" date="2000" name="J. Org. Chem.">
        <title>Yanuthones: novel metabolites from a marine isolate of Aspergillus niger.</title>
        <authorList>
            <person name="Bugni T.S."/>
            <person name="Abbanat D."/>
            <person name="Bernan V.S."/>
            <person name="Maiese W.M."/>
            <person name="Greenstein M."/>
            <person name="Van Wagoner R.M."/>
            <person name="Ireland C.M."/>
        </authorList>
    </citation>
    <scope>BIOTECHNOLOGY</scope>
</reference>
<reference key="3">
    <citation type="journal article" date="2014" name="Chem. Biol.">
        <title>Molecular and chemical characterization of the biosynthesis of the 6-MSA-derived meroterpenoid yanuthone D in Aspergillus niger.</title>
        <authorList>
            <person name="Holm D.K."/>
            <person name="Petersen L.M."/>
            <person name="Klitgaard A."/>
            <person name="Knudsen P.B."/>
            <person name="Jarczynska Z.D."/>
            <person name="Nielsen K.F."/>
            <person name="Gotfredsen C.H."/>
            <person name="Larsen T.O."/>
            <person name="Mortensen U.H."/>
        </authorList>
    </citation>
    <scope>FUNCTION</scope>
    <scope>CATALYTIC ACTIVITY</scope>
    <scope>DISRUPTION PHENOTYPE</scope>
</reference>
<comment type="function">
    <text evidence="9">Non-reducing polyketide synthase; part of the gene cluster that mediates the biosynthesis of yanuthone D, a fungal isoprenoid epoxycyclohexenone that acts as an antibiotic against fungi and bacteria (PubMed:24684908). The first step of the pathway is the synthesis of 6-methylsalicylic acid (6-MSA) by the polyketide synthase yanA (PubMed:24684908). 6-MSA is then converted to m-cresol by the decarboxylase yanB (PubMed:24684908). The cytochrome P450 monooxygenase yanC then catalyzes the oxidation of m-cresol to toluquinol (PubMed:24684908). Epoxidation of toluquinol is then performed by the short chain dehydrogenase yanD, with the help of yanE, and a further prenylation by yanG leads to 7-deacetoxyyanuthone A (PubMed:24684908). The next step is the hydroxylation of C-22 of 7-deacetoxyyanuthone A by the cytochrome P450 monooxygenase yanH to yield 22-deacetylyanuthone A (PubMed:24684908). O-Mevalon transferase yanI then attaches mevalon to the hydroxyl group of 22-deacetylyanuthone A to produce yanuthone E (PubMed:24684908). Finally, the FAD-dependent monooxygenase yanF oxidizes the hydroxyl group at C15 of yanuthone E to form yanuthone D (PubMed:24684908). Furthermore, several branching points in the pathway lead to the production of yanuthones F and G from 7-deacetoxyyanuthone A; yanuthones H and I from 22-deacetylyanuthone A; and yanuthone J from yanuthone E (PubMed:24684908).</text>
</comment>
<comment type="catalytic activity">
    <reaction evidence="9">
        <text>3 malonyl-CoA + acetyl-CoA + NADPH + 3 H(+) = 6-methylsalicylate + 3 CO2 + NADP(+) + 4 CoA + H2O</text>
        <dbReference type="Rhea" id="RHEA:12240"/>
        <dbReference type="ChEBI" id="CHEBI:15377"/>
        <dbReference type="ChEBI" id="CHEBI:15378"/>
        <dbReference type="ChEBI" id="CHEBI:16526"/>
        <dbReference type="ChEBI" id="CHEBI:36658"/>
        <dbReference type="ChEBI" id="CHEBI:57287"/>
        <dbReference type="ChEBI" id="CHEBI:57288"/>
        <dbReference type="ChEBI" id="CHEBI:57384"/>
        <dbReference type="ChEBI" id="CHEBI:57783"/>
        <dbReference type="ChEBI" id="CHEBI:58349"/>
        <dbReference type="EC" id="2.3.1.165"/>
    </reaction>
    <physiologicalReaction direction="left-to-right" evidence="9">
        <dbReference type="Rhea" id="RHEA:12241"/>
    </physiologicalReaction>
</comment>
<comment type="pathway">
    <text evidence="9">Secondary metabolite biosynthesis; terpenoid biosynthesis.</text>
</comment>
<comment type="domain">
    <text evidence="1">Multidomain protein; including a starter unit:ACP transacylase (SAT) that selects the starter unit; a ketosynthase (KS) that catalyzes repeated decarboxylative condensation to elongate the polyketide backbone; a malonyl-CoA:ACP transacylase (MAT) that selects and transfers the extender unit malonyl-CoA; a product template (PT) domain that controls the immediate cyclization regioselectivity of the reactive polyketide backbone; and an acyl-carrier protein (ACP) that serves as the tether of the growing and completed polyketide via its phosphopantetheinyl arm (By similarity).</text>
</comment>
<comment type="disruption phenotype">
    <text evidence="9">Loses the ability to produce yanuthones D and E (PubMed:24684908).</text>
</comment>
<comment type="biotechnology">
    <text evidence="8">Yanuthone D is an antibiotic against C.albicans, methicillin-resistant S.aureus (MRSA), and vancomycin-resistant Enterococcus (PubMed:11031048).</text>
</comment>
<sequence length="1779" mass="190967">MSASRSSTKFSTPAEGSDNGKEFTTPATSTEGHEVPDRPGDALADVAIIGMACRTPGDVRSPDSLWQYLLKKGDASGSLPDWRWEPYRQRHPRNAALLAQTTAKGYFLDDIDHFDAAFFSISPREAEQMDPQQRLALEVAWEALENAGISPPQLAGSNTSVYMGVNSDDYAKLLLEDLPNVDAHMGVGTAYCGIPSRISYILDLMGPSVALDAACASSLVAVHHARQAIRAGETDLAIAGGVNALLGPGLTRVLDEAGAISTDGKCRSFDETASGYGRGEGAGVVILKRLDKALADGDHVLAVLKGSAVASDGKTLGIMAPNARAQLLVAQKALAEAKVSADSINYVEAHATSTSLGDPTETNALAEVYGAGSGRSPSDPCYIGSIKPNIGHLEAGAGVMGLIKAVLVLRHGQVPPQANLKTLNSKIAWNENLLCPPRELVTLPCPGPIHPLRAAVASYGYSGTVSHAVLEAFAGHSEFAERLSQIPTGDDPSPVLLLISAPQARRVSAAAGALKQWLSENEASISLKTVSSTLAQRRAHHRYRHAIVADSVPDAIAALDDVSKEAPNRWVIKDKIDSKAAKGPVWIFSGHGAQWADMGRELFESSPAFEEVVRNLEPIIQDEVGFSAIETLQKGCPDRSDVVQVMTFLMHLGIAAVLEIESGPPSAVVGHSLGEAAAAVVSGALTWREGALVVCRRARLYRELMGQGAMALVRVSAEEARTRIGRQTGVWVAIETSPSACVLSGEVDAIKQLSDRWREEGIEVRMVASDVPFHTPMLERLAKPLYESLRGELHPRVPNRALFSTSQPDPRSEVLRDAQYWVTNMIQPVRLQSAIAAIAQDGFRALVEVSSHPIVTHSVVETMGECTEDPVLVTPTMVRRQPALKSILAATGRLHCFGCAIKFIELDPNAPWNSSVPSTVWHHQPFYRAVSQTSASSQLETTHDPAANNLLGKRIALWGTEEVLYQTRLEEENRPFPGHHPLHGSEIVPAAVLLRTFLQALTPRCVEQVSLQVPVVVSPARKVQIRHNTRNITITSCLEESSSQEDGSWLVNTTAAVGAANVVPSQSRMDLSELRKRLPQKLADSFSIDYLASVGVSAMGFPWQVTHHVASDDEMLARVDANPDNMGGMNDFLTSLMDAATSISSTLWHRQPLLRMPTSVRRVVAVHEIPIPRVVYIHCTKVASTSECTADVTLTGEDGTVLMEIQGMSFAGLEGESFSRKSTAGLVHQIQWPPAALVEDPSEFSHIAFVTPDITDPRLEQYQSQLDALAITSSVHQAASDLPLTSHTSLAVVYLPQTMTDVFDTATRSCNDLVSIIQTITAAASSTTRVFVLTAGTELGHSALLGLSRIIQAEHPDIWGSLIEVEDTFSLPLMAMRYVRDADVIRIKDGVPRIARLRPLPSASSSLTPLTFSPASTYLITGGLGALGLSVAHWMVTQGARRLLLLSRRALPPRSTWSSTHMNNPTIQSILALERLGATVHCLPIDISLPMAASGLRSTLETLNLPSVAGVIHAAGIVSDQLVEQVTPDVLESVLAPKIKGALNLHDVFPPASLDFFVLFSSCGQLLGFPGQASYASGNAFLDGLARSRRAQGDNAISLLWTTWRGMGMGQSANGAMEAELYARGITDITPDEAFRAWSAVASTGGGGTDHAVIVRARVLEGGEPLPHPILTDIATRKAEVVNAGEHPAGSQEVKLSGRELEQHLRDVINGCVSKTLSVKEDEIDDAVALAEMGMDSVMTVNFRMTLQQTLKVPVGPTLIWKCPTVQHLVKHFTKELDA</sequence>
<gene>
    <name evidence="10" type="primary">yanA</name>
    <name evidence="10" type="synonym">pks48</name>
    <name type="ORF">ASPNIDRAFT_44965</name>
</gene>
<keyword id="KW-0489">Methyltransferase</keyword>
<keyword id="KW-0511">Multifunctional enzyme</keyword>
<keyword id="KW-0596">Phosphopantetheine</keyword>
<keyword id="KW-0597">Phosphoprotein</keyword>
<keyword id="KW-0808">Transferase</keyword>
<accession>G3Y419</accession>
<proteinExistence type="evidence at protein level"/>
<dbReference type="EC" id="2.3.1.165" evidence="9"/>
<dbReference type="EMBL" id="ACJE01000012">
    <property type="protein sequence ID" value="EHA22196.1"/>
    <property type="molecule type" value="Genomic_DNA"/>
</dbReference>
<dbReference type="SMR" id="G3Y419"/>
<dbReference type="STRING" id="380704.G3Y419"/>
<dbReference type="VEuPathDB" id="FungiDB:ASPNIDRAFT2_1123159"/>
<dbReference type="HOGENOM" id="CLU_000022_35_3_1"/>
<dbReference type="OrthoDB" id="46440at5052"/>
<dbReference type="BRENDA" id="2.3.1.165">
    <property type="organism ID" value="518"/>
</dbReference>
<dbReference type="UniPathway" id="UPA00213"/>
<dbReference type="Proteomes" id="UP000009038">
    <property type="component" value="Unassembled WGS sequence"/>
</dbReference>
<dbReference type="GO" id="GO:0004315">
    <property type="term" value="F:3-oxoacyl-[acyl-carrier-protein] synthase activity"/>
    <property type="evidence" value="ECO:0007669"/>
    <property type="project" value="InterPro"/>
</dbReference>
<dbReference type="GO" id="GO:0050641">
    <property type="term" value="F:6-methylsalicylic acid synthase activity"/>
    <property type="evidence" value="ECO:0007669"/>
    <property type="project" value="UniProtKB-EC"/>
</dbReference>
<dbReference type="GO" id="GO:0004312">
    <property type="term" value="F:fatty acid synthase activity"/>
    <property type="evidence" value="ECO:0007669"/>
    <property type="project" value="TreeGrafter"/>
</dbReference>
<dbReference type="GO" id="GO:0008168">
    <property type="term" value="F:methyltransferase activity"/>
    <property type="evidence" value="ECO:0007669"/>
    <property type="project" value="UniProtKB-KW"/>
</dbReference>
<dbReference type="GO" id="GO:0031177">
    <property type="term" value="F:phosphopantetheine binding"/>
    <property type="evidence" value="ECO:0007669"/>
    <property type="project" value="InterPro"/>
</dbReference>
<dbReference type="GO" id="GO:0006633">
    <property type="term" value="P:fatty acid biosynthetic process"/>
    <property type="evidence" value="ECO:0007669"/>
    <property type="project" value="InterPro"/>
</dbReference>
<dbReference type="GO" id="GO:0032259">
    <property type="term" value="P:methylation"/>
    <property type="evidence" value="ECO:0007669"/>
    <property type="project" value="UniProtKB-KW"/>
</dbReference>
<dbReference type="GO" id="GO:0044550">
    <property type="term" value="P:secondary metabolite biosynthetic process"/>
    <property type="evidence" value="ECO:0007669"/>
    <property type="project" value="TreeGrafter"/>
</dbReference>
<dbReference type="GO" id="GO:0016114">
    <property type="term" value="P:terpenoid biosynthetic process"/>
    <property type="evidence" value="ECO:0007669"/>
    <property type="project" value="UniProtKB-UniPathway"/>
</dbReference>
<dbReference type="CDD" id="cd00833">
    <property type="entry name" value="PKS"/>
    <property type="match status" value="1"/>
</dbReference>
<dbReference type="Gene3D" id="3.40.47.10">
    <property type="match status" value="1"/>
</dbReference>
<dbReference type="Gene3D" id="1.10.1200.10">
    <property type="entry name" value="ACP-like"/>
    <property type="match status" value="1"/>
</dbReference>
<dbReference type="Gene3D" id="3.30.70.250">
    <property type="entry name" value="Malonyl-CoA ACP transacylase, ACP-binding"/>
    <property type="match status" value="1"/>
</dbReference>
<dbReference type="Gene3D" id="3.40.366.10">
    <property type="entry name" value="Malonyl-Coenzyme A Acyl Carrier Protein, domain 2"/>
    <property type="match status" value="1"/>
</dbReference>
<dbReference type="Gene3D" id="3.40.50.720">
    <property type="entry name" value="NAD(P)-binding Rossmann-like Domain"/>
    <property type="match status" value="1"/>
</dbReference>
<dbReference type="Gene3D" id="3.10.129.110">
    <property type="entry name" value="Polyketide synthase dehydratase"/>
    <property type="match status" value="1"/>
</dbReference>
<dbReference type="InterPro" id="IPR001227">
    <property type="entry name" value="Ac_transferase_dom_sf"/>
</dbReference>
<dbReference type="InterPro" id="IPR036736">
    <property type="entry name" value="ACP-like_sf"/>
</dbReference>
<dbReference type="InterPro" id="IPR014043">
    <property type="entry name" value="Acyl_transferase_dom"/>
</dbReference>
<dbReference type="InterPro" id="IPR016035">
    <property type="entry name" value="Acyl_Trfase/lysoPLipase"/>
</dbReference>
<dbReference type="InterPro" id="IPR018201">
    <property type="entry name" value="Ketoacyl_synth_AS"/>
</dbReference>
<dbReference type="InterPro" id="IPR014031">
    <property type="entry name" value="Ketoacyl_synth_C"/>
</dbReference>
<dbReference type="InterPro" id="IPR014030">
    <property type="entry name" value="Ketoacyl_synth_N"/>
</dbReference>
<dbReference type="InterPro" id="IPR016036">
    <property type="entry name" value="Malonyl_transacylase_ACP-bd"/>
</dbReference>
<dbReference type="InterPro" id="IPR036291">
    <property type="entry name" value="NAD(P)-bd_dom_sf"/>
</dbReference>
<dbReference type="InterPro" id="IPR020841">
    <property type="entry name" value="PKS_Beta-ketoAc_synthase_dom"/>
</dbReference>
<dbReference type="InterPro" id="IPR042104">
    <property type="entry name" value="PKS_dehydratase_sf"/>
</dbReference>
<dbReference type="InterPro" id="IPR049552">
    <property type="entry name" value="PKS_DH_N"/>
</dbReference>
<dbReference type="InterPro" id="IPR013968">
    <property type="entry name" value="PKS_KR"/>
</dbReference>
<dbReference type="InterPro" id="IPR049900">
    <property type="entry name" value="PKS_mFAS_DH"/>
</dbReference>
<dbReference type="InterPro" id="IPR050091">
    <property type="entry name" value="PKS_NRPS_Biosynth_Enz"/>
</dbReference>
<dbReference type="InterPro" id="IPR020806">
    <property type="entry name" value="PKS_PP-bd"/>
</dbReference>
<dbReference type="InterPro" id="IPR009081">
    <property type="entry name" value="PP-bd_ACP"/>
</dbReference>
<dbReference type="InterPro" id="IPR016039">
    <property type="entry name" value="Thiolase-like"/>
</dbReference>
<dbReference type="PANTHER" id="PTHR43775">
    <property type="entry name" value="FATTY ACID SYNTHASE"/>
    <property type="match status" value="1"/>
</dbReference>
<dbReference type="PANTHER" id="PTHR43775:SF22">
    <property type="entry name" value="SYNTHASE, PUTATIVE (JCVI)-RELATED"/>
    <property type="match status" value="1"/>
</dbReference>
<dbReference type="Pfam" id="PF00698">
    <property type="entry name" value="Acyl_transf_1"/>
    <property type="match status" value="1"/>
</dbReference>
<dbReference type="Pfam" id="PF22621">
    <property type="entry name" value="CurL-like_PKS_C"/>
    <property type="match status" value="1"/>
</dbReference>
<dbReference type="Pfam" id="PF00109">
    <property type="entry name" value="ketoacyl-synt"/>
    <property type="match status" value="1"/>
</dbReference>
<dbReference type="Pfam" id="PF02801">
    <property type="entry name" value="Ketoacyl-synt_C"/>
    <property type="match status" value="1"/>
</dbReference>
<dbReference type="Pfam" id="PF08659">
    <property type="entry name" value="KR"/>
    <property type="match status" value="1"/>
</dbReference>
<dbReference type="Pfam" id="PF21089">
    <property type="entry name" value="PKS_DH_N"/>
    <property type="match status" value="1"/>
</dbReference>
<dbReference type="Pfam" id="PF00550">
    <property type="entry name" value="PP-binding"/>
    <property type="match status" value="1"/>
</dbReference>
<dbReference type="SMART" id="SM00827">
    <property type="entry name" value="PKS_AT"/>
    <property type="match status" value="1"/>
</dbReference>
<dbReference type="SMART" id="SM00822">
    <property type="entry name" value="PKS_KR"/>
    <property type="match status" value="1"/>
</dbReference>
<dbReference type="SMART" id="SM00825">
    <property type="entry name" value="PKS_KS"/>
    <property type="match status" value="1"/>
</dbReference>
<dbReference type="SMART" id="SM00823">
    <property type="entry name" value="PKS_PP"/>
    <property type="match status" value="1"/>
</dbReference>
<dbReference type="SUPFAM" id="SSF47336">
    <property type="entry name" value="ACP-like"/>
    <property type="match status" value="1"/>
</dbReference>
<dbReference type="SUPFAM" id="SSF52151">
    <property type="entry name" value="FabD/lysophospholipase-like"/>
    <property type="match status" value="1"/>
</dbReference>
<dbReference type="SUPFAM" id="SSF51735">
    <property type="entry name" value="NAD(P)-binding Rossmann-fold domains"/>
    <property type="match status" value="2"/>
</dbReference>
<dbReference type="SUPFAM" id="SSF55048">
    <property type="entry name" value="Probable ACP-binding domain of malonyl-CoA ACP transacylase"/>
    <property type="match status" value="1"/>
</dbReference>
<dbReference type="SUPFAM" id="SSF53901">
    <property type="entry name" value="Thiolase-like"/>
    <property type="match status" value="1"/>
</dbReference>
<dbReference type="PROSITE" id="PS50075">
    <property type="entry name" value="CARRIER"/>
    <property type="match status" value="1"/>
</dbReference>
<dbReference type="PROSITE" id="PS00606">
    <property type="entry name" value="KS3_1"/>
    <property type="match status" value="1"/>
</dbReference>
<dbReference type="PROSITE" id="PS52004">
    <property type="entry name" value="KS3_2"/>
    <property type="match status" value="1"/>
</dbReference>
<dbReference type="PROSITE" id="PS52019">
    <property type="entry name" value="PKS_MFAS_DH"/>
    <property type="match status" value="1"/>
</dbReference>
<name>YANA_ASPNA</name>
<feature type="chain" id="PRO_0000436664" description="6-methylsalicylic acid synthase">
    <location>
        <begin position="1"/>
        <end position="1779"/>
    </location>
</feature>
<feature type="domain" description="Ketosynthase family 3 (KS3)" evidence="4">
    <location>
        <begin position="43"/>
        <end position="472"/>
    </location>
</feature>
<feature type="domain" description="PKS/mFAS DH" evidence="5">
    <location>
        <begin position="948"/>
        <end position="1219"/>
    </location>
</feature>
<feature type="domain" description="Carrier" evidence="3">
    <location>
        <begin position="1703"/>
        <end position="1777"/>
    </location>
</feature>
<feature type="region of interest" description="Disordered" evidence="7">
    <location>
        <begin position="1"/>
        <end position="40"/>
    </location>
</feature>
<feature type="region of interest" description="Malonyl-CoA:ACP transacylase (MAT) domain" evidence="2">
    <location>
        <begin position="586"/>
        <end position="883"/>
    </location>
</feature>
<feature type="region of interest" description="Product template (PT) domain" evidence="2">
    <location>
        <begin position="942"/>
        <end position="1218"/>
    </location>
</feature>
<feature type="region of interest" description="N-terminal hotdog fold" evidence="5">
    <location>
        <begin position="948"/>
        <end position="1064"/>
    </location>
</feature>
<feature type="region of interest" description="C-terminal hotdog fold" evidence="5">
    <location>
        <begin position="1079"/>
        <end position="1219"/>
    </location>
</feature>
<feature type="compositionally biased region" description="Polar residues" evidence="7">
    <location>
        <begin position="1"/>
        <end position="11"/>
    </location>
</feature>
<feature type="compositionally biased region" description="Basic and acidic residues" evidence="7">
    <location>
        <begin position="31"/>
        <end position="40"/>
    </location>
</feature>
<feature type="active site" description="For beta-ketoacyl synthase activity" evidence="4">
    <location>
        <position position="215"/>
    </location>
</feature>
<feature type="active site" description="For beta-ketoacyl synthase activity" evidence="4">
    <location>
        <position position="350"/>
    </location>
</feature>
<feature type="active site" description="For beta-ketoacyl synthase activity" evidence="4">
    <location>
        <position position="392"/>
    </location>
</feature>
<feature type="active site" description="For acyl/malonyl transferase activity" evidence="6">
    <location>
        <position position="672"/>
    </location>
</feature>
<feature type="active site" description="Proton acceptor; for dehydratase activity" evidence="5">
    <location>
        <position position="980"/>
    </location>
</feature>
<feature type="active site" description="Proton donor; for dehydratase activity" evidence="5">
    <location>
        <position position="1138"/>
    </location>
</feature>
<feature type="modified residue" description="O-(pantetheine 4'-phosphoryl)serine" evidence="3">
    <location>
        <position position="1737"/>
    </location>
</feature>
<evidence type="ECO:0000250" key="1">
    <source>
        <dbReference type="UniProtKB" id="Q5B0D0"/>
    </source>
</evidence>
<evidence type="ECO:0000255" key="2"/>
<evidence type="ECO:0000255" key="3">
    <source>
        <dbReference type="PROSITE-ProRule" id="PRU00258"/>
    </source>
</evidence>
<evidence type="ECO:0000255" key="4">
    <source>
        <dbReference type="PROSITE-ProRule" id="PRU01348"/>
    </source>
</evidence>
<evidence type="ECO:0000255" key="5">
    <source>
        <dbReference type="PROSITE-ProRule" id="PRU01363"/>
    </source>
</evidence>
<evidence type="ECO:0000255" key="6">
    <source>
        <dbReference type="PROSITE-ProRule" id="PRU10022"/>
    </source>
</evidence>
<evidence type="ECO:0000256" key="7">
    <source>
        <dbReference type="SAM" id="MobiDB-lite"/>
    </source>
</evidence>
<evidence type="ECO:0000269" key="8">
    <source>
    </source>
</evidence>
<evidence type="ECO:0000269" key="9">
    <source>
    </source>
</evidence>
<evidence type="ECO:0000303" key="10">
    <source>
    </source>
</evidence>